<feature type="chain" id="PRO_0000285122" description="Epsilon-sarcoglycan" evidence="1">
    <location>
        <begin position="1"/>
        <end position="437"/>
    </location>
</feature>
<feature type="topological domain" description="Extracellular" evidence="2">
    <location>
        <begin position="1"/>
        <end position="317"/>
    </location>
</feature>
<feature type="transmembrane region" description="Helical" evidence="2">
    <location>
        <begin position="318"/>
        <end position="338"/>
    </location>
</feature>
<feature type="topological domain" description="Cytoplasmic" evidence="2">
    <location>
        <begin position="339"/>
        <end position="437"/>
    </location>
</feature>
<feature type="region of interest" description="Disordered" evidence="3">
    <location>
        <begin position="418"/>
        <end position="437"/>
    </location>
</feature>
<feature type="glycosylation site" description="N-linked (GlcNAc...) asparagine" evidence="2">
    <location>
        <position position="200"/>
    </location>
</feature>
<comment type="function">
    <text evidence="1">Component of the sarcoglycan complex, a subcomplex of the dystrophin-glycoprotein complex which forms a link between the F-actin cytoskeleton and the extracellular matrix.</text>
</comment>
<comment type="subcellular location">
    <subcellularLocation>
        <location evidence="1">Cell membrane</location>
        <location evidence="1">Sarcolemma</location>
        <topology evidence="1">Single-pass membrane protein</topology>
    </subcellularLocation>
    <subcellularLocation>
        <location evidence="1">Cytoplasm</location>
        <location evidence="1">Cytoskeleton</location>
    </subcellularLocation>
    <subcellularLocation>
        <location evidence="1">Cell projection</location>
        <location evidence="1">Dendrite</location>
    </subcellularLocation>
    <subcellularLocation>
        <location evidence="1">Golgi apparatus</location>
    </subcellularLocation>
</comment>
<comment type="PTM">
    <text evidence="1">N-glycosylated.</text>
</comment>
<comment type="PTM">
    <text evidence="1">Ubiquitinated, leading to its degradation by the proteasome.</text>
</comment>
<comment type="similarity">
    <text evidence="4">Belongs to the sarcoglycan alpha/epsilon family.</text>
</comment>
<name>SGCE_BOVIN</name>
<dbReference type="EMBL" id="BC113276">
    <property type="protein sequence ID" value="AAI13277.1"/>
    <property type="molecule type" value="mRNA"/>
</dbReference>
<dbReference type="RefSeq" id="NP_001068613.1">
    <property type="nucleotide sequence ID" value="NM_001075145.1"/>
</dbReference>
<dbReference type="SMR" id="Q29S03"/>
<dbReference type="FunCoup" id="Q29S03">
    <property type="interactions" value="421"/>
</dbReference>
<dbReference type="STRING" id="9913.ENSBTAP00000059874"/>
<dbReference type="GlyCosmos" id="Q29S03">
    <property type="glycosylation" value="1 site, No reported glycans"/>
</dbReference>
<dbReference type="GlyGen" id="Q29S03">
    <property type="glycosylation" value="1 site"/>
</dbReference>
<dbReference type="PaxDb" id="9913-ENSBTAP00000028355"/>
<dbReference type="GeneID" id="407209"/>
<dbReference type="KEGG" id="bta:407209"/>
<dbReference type="CTD" id="8910"/>
<dbReference type="eggNOG" id="KOG4482">
    <property type="taxonomic scope" value="Eukaryota"/>
</dbReference>
<dbReference type="InParanoid" id="Q29S03"/>
<dbReference type="OrthoDB" id="10019906at2759"/>
<dbReference type="Proteomes" id="UP000009136">
    <property type="component" value="Unplaced"/>
</dbReference>
<dbReference type="GO" id="GO:0005856">
    <property type="term" value="C:cytoskeleton"/>
    <property type="evidence" value="ECO:0007669"/>
    <property type="project" value="UniProtKB-SubCell"/>
</dbReference>
<dbReference type="GO" id="GO:0032590">
    <property type="term" value="C:dendrite membrane"/>
    <property type="evidence" value="ECO:0000250"/>
    <property type="project" value="UniProtKB"/>
</dbReference>
<dbReference type="GO" id="GO:0005794">
    <property type="term" value="C:Golgi apparatus"/>
    <property type="evidence" value="ECO:0000250"/>
    <property type="project" value="UniProtKB"/>
</dbReference>
<dbReference type="GO" id="GO:0005886">
    <property type="term" value="C:plasma membrane"/>
    <property type="evidence" value="ECO:0000250"/>
    <property type="project" value="UniProtKB"/>
</dbReference>
<dbReference type="GO" id="GO:0016012">
    <property type="term" value="C:sarcoglycan complex"/>
    <property type="evidence" value="ECO:0000318"/>
    <property type="project" value="GO_Central"/>
</dbReference>
<dbReference type="GO" id="GO:0042383">
    <property type="term" value="C:sarcolemma"/>
    <property type="evidence" value="ECO:0007669"/>
    <property type="project" value="UniProtKB-SubCell"/>
</dbReference>
<dbReference type="InterPro" id="IPR006644">
    <property type="entry name" value="Cadg"/>
</dbReference>
<dbReference type="InterPro" id="IPR008908">
    <property type="entry name" value="Sarcoglycan_alpha/epsilon"/>
</dbReference>
<dbReference type="InterPro" id="IPR048347">
    <property type="entry name" value="Sarcoglycan_C"/>
</dbReference>
<dbReference type="InterPro" id="IPR048346">
    <property type="entry name" value="Sarcoglycan_N"/>
</dbReference>
<dbReference type="PANTHER" id="PTHR10132">
    <property type="entry name" value="ALPHA-/EPSILON-SARCOGLYCAN FAMILY MEMBER"/>
    <property type="match status" value="1"/>
</dbReference>
<dbReference type="PANTHER" id="PTHR10132:SF17">
    <property type="entry name" value="EPSILON-SARCOGLYCAN"/>
    <property type="match status" value="1"/>
</dbReference>
<dbReference type="Pfam" id="PF05510">
    <property type="entry name" value="Sarcoglycan_2"/>
    <property type="match status" value="1"/>
</dbReference>
<dbReference type="Pfam" id="PF20989">
    <property type="entry name" value="Sarcoglycan_2_C"/>
    <property type="match status" value="1"/>
</dbReference>
<dbReference type="SMART" id="SM00736">
    <property type="entry name" value="CADG"/>
    <property type="match status" value="1"/>
</dbReference>
<gene>
    <name type="primary">SGCE</name>
</gene>
<sequence length="437" mass="49889">MQLPWWWELGDPCAWTGQGRGTRRMSPATTGTFLLTVYTIFSKVHSDRNVYPSAGVLFVHVLEREYFKGEFPPYPKPGEISNDPITFNTNLMGYPDRPGWLRYIQRTPYSDGVLYGSPTAENVGKPTVIEITAYNRRTFETARHNLIINIMSAEDFPLPYQAEFFIKNMNVEEMLASEVLGDFLGAVKNVWQPERLNAINITSALDRGGRVPLPINDMKEGVYVMVGADVPFSSCLREVENPQNQLRCSQEMEPVITCDKKFRTQFYIDWCKISLVDKTKQVSTYQEVIRGEGILPDGGEYKPPSDSLKSRDYYTDFLVTLAVPSAVALVLFLILAYIMCCRREGVEKRNMQTPDIQLVHHSAIQKSTKELRDMSKNREIAWPLSTLPVFHPVTGEIIPPLHTDNYESTNMPLMQTQQNLPHQTQIPQQQTTGKWYS</sequence>
<evidence type="ECO:0000250" key="1"/>
<evidence type="ECO:0000255" key="2"/>
<evidence type="ECO:0000256" key="3">
    <source>
        <dbReference type="SAM" id="MobiDB-lite"/>
    </source>
</evidence>
<evidence type="ECO:0000305" key="4"/>
<proteinExistence type="evidence at transcript level"/>
<reference key="1">
    <citation type="submission" date="2006-02" db="EMBL/GenBank/DDBJ databases">
        <authorList>
            <consortium name="NIH - Mammalian Gene Collection (MGC) project"/>
        </authorList>
    </citation>
    <scope>NUCLEOTIDE SEQUENCE [LARGE SCALE MRNA]</scope>
    <source>
        <strain>Hereford</strain>
        <tissue>Uterus</tissue>
    </source>
</reference>
<protein>
    <recommendedName>
        <fullName>Epsilon-sarcoglycan</fullName>
        <shortName>Epsilon-SG</shortName>
    </recommendedName>
</protein>
<accession>Q29S03</accession>
<organism>
    <name type="scientific">Bos taurus</name>
    <name type="common">Bovine</name>
    <dbReference type="NCBI Taxonomy" id="9913"/>
    <lineage>
        <taxon>Eukaryota</taxon>
        <taxon>Metazoa</taxon>
        <taxon>Chordata</taxon>
        <taxon>Craniata</taxon>
        <taxon>Vertebrata</taxon>
        <taxon>Euteleostomi</taxon>
        <taxon>Mammalia</taxon>
        <taxon>Eutheria</taxon>
        <taxon>Laurasiatheria</taxon>
        <taxon>Artiodactyla</taxon>
        <taxon>Ruminantia</taxon>
        <taxon>Pecora</taxon>
        <taxon>Bovidae</taxon>
        <taxon>Bovinae</taxon>
        <taxon>Bos</taxon>
    </lineage>
</organism>
<keyword id="KW-1003">Cell membrane</keyword>
<keyword id="KW-0966">Cell projection</keyword>
<keyword id="KW-0963">Cytoplasm</keyword>
<keyword id="KW-0206">Cytoskeleton</keyword>
<keyword id="KW-0325">Glycoprotein</keyword>
<keyword id="KW-0333">Golgi apparatus</keyword>
<keyword id="KW-0472">Membrane</keyword>
<keyword id="KW-1185">Reference proteome</keyword>
<keyword id="KW-0812">Transmembrane</keyword>
<keyword id="KW-1133">Transmembrane helix</keyword>
<keyword id="KW-0832">Ubl conjugation</keyword>